<reference key="1">
    <citation type="submission" date="2008-10" db="EMBL/GenBank/DDBJ databases">
        <title>Genome sequence of Bacillus cereus G9842.</title>
        <authorList>
            <person name="Dodson R.J."/>
            <person name="Durkin A.S."/>
            <person name="Rosovitz M.J."/>
            <person name="Rasko D.A."/>
            <person name="Hoffmaster A."/>
            <person name="Ravel J."/>
            <person name="Sutton G."/>
        </authorList>
    </citation>
    <scope>NUCLEOTIDE SEQUENCE [LARGE SCALE GENOMIC DNA]</scope>
    <source>
        <strain>G9842</strain>
    </source>
</reference>
<feature type="chain" id="PRO_1000119370" description="Imidazole glycerol phosphate synthase subunit HisH">
    <location>
        <begin position="1"/>
        <end position="209"/>
    </location>
</feature>
<feature type="domain" description="Glutamine amidotransferase type-1" evidence="1">
    <location>
        <begin position="1"/>
        <end position="205"/>
    </location>
</feature>
<feature type="active site" description="Nucleophile" evidence="1">
    <location>
        <position position="79"/>
    </location>
</feature>
<feature type="active site" evidence="1">
    <location>
        <position position="180"/>
    </location>
</feature>
<feature type="active site" evidence="1">
    <location>
        <position position="182"/>
    </location>
</feature>
<gene>
    <name evidence="1" type="primary">hisH</name>
    <name type="ordered locus">BCG9842_B3883</name>
</gene>
<organism>
    <name type="scientific">Bacillus cereus (strain G9842)</name>
    <dbReference type="NCBI Taxonomy" id="405531"/>
    <lineage>
        <taxon>Bacteria</taxon>
        <taxon>Bacillati</taxon>
        <taxon>Bacillota</taxon>
        <taxon>Bacilli</taxon>
        <taxon>Bacillales</taxon>
        <taxon>Bacillaceae</taxon>
        <taxon>Bacillus</taxon>
        <taxon>Bacillus cereus group</taxon>
    </lineage>
</organism>
<keyword id="KW-0028">Amino-acid biosynthesis</keyword>
<keyword id="KW-0963">Cytoplasm</keyword>
<keyword id="KW-0315">Glutamine amidotransferase</keyword>
<keyword id="KW-0368">Histidine biosynthesis</keyword>
<keyword id="KW-0378">Hydrolase</keyword>
<keyword id="KW-0456">Lyase</keyword>
<dbReference type="EC" id="4.3.2.10" evidence="1"/>
<dbReference type="EC" id="3.5.1.2" evidence="1"/>
<dbReference type="EMBL" id="CP001186">
    <property type="protein sequence ID" value="ACK98339.1"/>
    <property type="molecule type" value="Genomic_DNA"/>
</dbReference>
<dbReference type="RefSeq" id="WP_000560346.1">
    <property type="nucleotide sequence ID" value="NC_011772.1"/>
</dbReference>
<dbReference type="SMR" id="B7INA1"/>
<dbReference type="MEROPS" id="C26.965"/>
<dbReference type="KEGG" id="bcg:BCG9842_B3883"/>
<dbReference type="HOGENOM" id="CLU_071837_2_2_9"/>
<dbReference type="UniPathway" id="UPA00031">
    <property type="reaction ID" value="UER00010"/>
</dbReference>
<dbReference type="Proteomes" id="UP000006744">
    <property type="component" value="Chromosome"/>
</dbReference>
<dbReference type="GO" id="GO:0005737">
    <property type="term" value="C:cytoplasm"/>
    <property type="evidence" value="ECO:0007669"/>
    <property type="project" value="UniProtKB-SubCell"/>
</dbReference>
<dbReference type="GO" id="GO:0004359">
    <property type="term" value="F:glutaminase activity"/>
    <property type="evidence" value="ECO:0007669"/>
    <property type="project" value="UniProtKB-EC"/>
</dbReference>
<dbReference type="GO" id="GO:0000107">
    <property type="term" value="F:imidazoleglycerol-phosphate synthase activity"/>
    <property type="evidence" value="ECO:0007669"/>
    <property type="project" value="UniProtKB-UniRule"/>
</dbReference>
<dbReference type="GO" id="GO:0016829">
    <property type="term" value="F:lyase activity"/>
    <property type="evidence" value="ECO:0007669"/>
    <property type="project" value="UniProtKB-KW"/>
</dbReference>
<dbReference type="GO" id="GO:0000105">
    <property type="term" value="P:L-histidine biosynthetic process"/>
    <property type="evidence" value="ECO:0007669"/>
    <property type="project" value="UniProtKB-UniRule"/>
</dbReference>
<dbReference type="CDD" id="cd01748">
    <property type="entry name" value="GATase1_IGP_Synthase"/>
    <property type="match status" value="1"/>
</dbReference>
<dbReference type="FunFam" id="3.40.50.880:FF:000028">
    <property type="entry name" value="Imidazole glycerol phosphate synthase subunit HisH"/>
    <property type="match status" value="1"/>
</dbReference>
<dbReference type="Gene3D" id="3.40.50.880">
    <property type="match status" value="1"/>
</dbReference>
<dbReference type="HAMAP" id="MF_00278">
    <property type="entry name" value="HisH"/>
    <property type="match status" value="1"/>
</dbReference>
<dbReference type="InterPro" id="IPR029062">
    <property type="entry name" value="Class_I_gatase-like"/>
</dbReference>
<dbReference type="InterPro" id="IPR017926">
    <property type="entry name" value="GATASE"/>
</dbReference>
<dbReference type="InterPro" id="IPR010139">
    <property type="entry name" value="Imidazole-glycPsynth_HisH"/>
</dbReference>
<dbReference type="NCBIfam" id="TIGR01855">
    <property type="entry name" value="IMP_synth_hisH"/>
    <property type="match status" value="1"/>
</dbReference>
<dbReference type="PANTHER" id="PTHR42701">
    <property type="entry name" value="IMIDAZOLE GLYCEROL PHOSPHATE SYNTHASE SUBUNIT HISH"/>
    <property type="match status" value="1"/>
</dbReference>
<dbReference type="PANTHER" id="PTHR42701:SF1">
    <property type="entry name" value="IMIDAZOLE GLYCEROL PHOSPHATE SYNTHASE SUBUNIT HISH"/>
    <property type="match status" value="1"/>
</dbReference>
<dbReference type="Pfam" id="PF00117">
    <property type="entry name" value="GATase"/>
    <property type="match status" value="1"/>
</dbReference>
<dbReference type="PIRSF" id="PIRSF000495">
    <property type="entry name" value="Amidotransf_hisH"/>
    <property type="match status" value="1"/>
</dbReference>
<dbReference type="SUPFAM" id="SSF52317">
    <property type="entry name" value="Class I glutamine amidotransferase-like"/>
    <property type="match status" value="1"/>
</dbReference>
<dbReference type="PROSITE" id="PS51273">
    <property type="entry name" value="GATASE_TYPE_1"/>
    <property type="match status" value="1"/>
</dbReference>
<sequence length="209" mass="23204">MIAIIDYGMGNIRSVEQALKYIGAEHIVTSDKEEILRSDGVILPGVGAFPKAMEVLEERDLVCVLKEVCDIGKPLLGICLGMQLLFERSEELKGCSGLGLLPGEIRKLKVSYKIPHMGWNELRKEREFPLWNGLVDGSFVYYVHSYYADCPDEIVCGVSDYGMQVPGFVAKGNVFGAQFHPEKSGEIGMQILKNFQGVVEAWKSSRLSI</sequence>
<accession>B7INA1</accession>
<evidence type="ECO:0000255" key="1">
    <source>
        <dbReference type="HAMAP-Rule" id="MF_00278"/>
    </source>
</evidence>
<comment type="function">
    <text evidence="1">IGPS catalyzes the conversion of PRFAR and glutamine to IGP, AICAR and glutamate. The HisH subunit catalyzes the hydrolysis of glutamine to glutamate and ammonia as part of the synthesis of IGP and AICAR. The resulting ammonia molecule is channeled to the active site of HisF.</text>
</comment>
<comment type="catalytic activity">
    <reaction evidence="1">
        <text>5-[(5-phospho-1-deoxy-D-ribulos-1-ylimino)methylamino]-1-(5-phospho-beta-D-ribosyl)imidazole-4-carboxamide + L-glutamine = D-erythro-1-(imidazol-4-yl)glycerol 3-phosphate + 5-amino-1-(5-phospho-beta-D-ribosyl)imidazole-4-carboxamide + L-glutamate + H(+)</text>
        <dbReference type="Rhea" id="RHEA:24793"/>
        <dbReference type="ChEBI" id="CHEBI:15378"/>
        <dbReference type="ChEBI" id="CHEBI:29985"/>
        <dbReference type="ChEBI" id="CHEBI:58278"/>
        <dbReference type="ChEBI" id="CHEBI:58359"/>
        <dbReference type="ChEBI" id="CHEBI:58475"/>
        <dbReference type="ChEBI" id="CHEBI:58525"/>
        <dbReference type="EC" id="4.3.2.10"/>
    </reaction>
</comment>
<comment type="catalytic activity">
    <reaction evidence="1">
        <text>L-glutamine + H2O = L-glutamate + NH4(+)</text>
        <dbReference type="Rhea" id="RHEA:15889"/>
        <dbReference type="ChEBI" id="CHEBI:15377"/>
        <dbReference type="ChEBI" id="CHEBI:28938"/>
        <dbReference type="ChEBI" id="CHEBI:29985"/>
        <dbReference type="ChEBI" id="CHEBI:58359"/>
        <dbReference type="EC" id="3.5.1.2"/>
    </reaction>
</comment>
<comment type="pathway">
    <text evidence="1">Amino-acid biosynthesis; L-histidine biosynthesis; L-histidine from 5-phospho-alpha-D-ribose 1-diphosphate: step 5/9.</text>
</comment>
<comment type="subunit">
    <text evidence="1">Heterodimer of HisH and HisF.</text>
</comment>
<comment type="subcellular location">
    <subcellularLocation>
        <location evidence="1">Cytoplasm</location>
    </subcellularLocation>
</comment>
<protein>
    <recommendedName>
        <fullName evidence="1">Imidazole glycerol phosphate synthase subunit HisH</fullName>
        <ecNumber evidence="1">4.3.2.10</ecNumber>
    </recommendedName>
    <alternativeName>
        <fullName evidence="1">IGP synthase glutaminase subunit</fullName>
        <ecNumber evidence="1">3.5.1.2</ecNumber>
    </alternativeName>
    <alternativeName>
        <fullName evidence="1">IGP synthase subunit HisH</fullName>
    </alternativeName>
    <alternativeName>
        <fullName evidence="1">ImGP synthase subunit HisH</fullName>
        <shortName evidence="1">IGPS subunit HisH</shortName>
    </alternativeName>
</protein>
<proteinExistence type="inferred from homology"/>
<name>HIS5_BACC2</name>